<dbReference type="EC" id="3.4.11.23"/>
<dbReference type="EMBL" id="AF201078">
    <property type="protein sequence ID" value="AAF19377.1"/>
    <property type="molecule type" value="Genomic_DNA"/>
</dbReference>
<dbReference type="EMBL" id="AE006468">
    <property type="protein sequence ID" value="AAL21430.1"/>
    <property type="molecule type" value="Genomic_DNA"/>
</dbReference>
<dbReference type="RefSeq" id="NP_461471.1">
    <property type="nucleotide sequence ID" value="NC_003197.2"/>
</dbReference>
<dbReference type="RefSeq" id="WP_000133541.1">
    <property type="nucleotide sequence ID" value="NC_003197.2"/>
</dbReference>
<dbReference type="SMR" id="Q9RF52"/>
<dbReference type="STRING" id="99287.STM2536"/>
<dbReference type="MEROPS" id="M17.004"/>
<dbReference type="PaxDb" id="99287-STM2536"/>
<dbReference type="GeneID" id="1254058"/>
<dbReference type="KEGG" id="stm:STM2536"/>
<dbReference type="PATRIC" id="fig|99287.12.peg.2676"/>
<dbReference type="HOGENOM" id="CLU_013734_7_1_6"/>
<dbReference type="OMA" id="FYQGFYT"/>
<dbReference type="PhylomeDB" id="Q9RF52"/>
<dbReference type="BioCyc" id="SENT99287:STM2536-MONOMER"/>
<dbReference type="BRENDA" id="3.4.11.1">
    <property type="organism ID" value="2169"/>
</dbReference>
<dbReference type="Proteomes" id="UP000001014">
    <property type="component" value="Chromosome"/>
</dbReference>
<dbReference type="GO" id="GO:0005737">
    <property type="term" value="C:cytoplasm"/>
    <property type="evidence" value="ECO:0000318"/>
    <property type="project" value="GO_Central"/>
</dbReference>
<dbReference type="GO" id="GO:0030145">
    <property type="term" value="F:manganese ion binding"/>
    <property type="evidence" value="ECO:0007669"/>
    <property type="project" value="UniProtKB-UniRule"/>
</dbReference>
<dbReference type="GO" id="GO:0070006">
    <property type="term" value="F:metalloaminopeptidase activity"/>
    <property type="evidence" value="ECO:0007669"/>
    <property type="project" value="InterPro"/>
</dbReference>
<dbReference type="GO" id="GO:0008233">
    <property type="term" value="F:peptidase activity"/>
    <property type="evidence" value="ECO:0000318"/>
    <property type="project" value="GO_Central"/>
</dbReference>
<dbReference type="GO" id="GO:0006508">
    <property type="term" value="P:proteolysis"/>
    <property type="evidence" value="ECO:0000318"/>
    <property type="project" value="GO_Central"/>
</dbReference>
<dbReference type="CDD" id="cd00433">
    <property type="entry name" value="Peptidase_M17"/>
    <property type="match status" value="1"/>
</dbReference>
<dbReference type="FunFam" id="3.40.630.10:FF:000037">
    <property type="entry name" value="Peptidase B"/>
    <property type="match status" value="1"/>
</dbReference>
<dbReference type="Gene3D" id="3.40.630.10">
    <property type="entry name" value="Zn peptidases"/>
    <property type="match status" value="1"/>
</dbReference>
<dbReference type="HAMAP" id="MF_00504">
    <property type="entry name" value="Aminopeptidase_M17"/>
    <property type="match status" value="1"/>
</dbReference>
<dbReference type="InterPro" id="IPR011356">
    <property type="entry name" value="Leucine_aapep/pepB"/>
</dbReference>
<dbReference type="InterPro" id="IPR047620">
    <property type="entry name" value="M17_PepB-like_N"/>
</dbReference>
<dbReference type="InterPro" id="IPR008330">
    <property type="entry name" value="Pept_M17_PepB"/>
</dbReference>
<dbReference type="InterPro" id="IPR000819">
    <property type="entry name" value="Peptidase_M17_C"/>
</dbReference>
<dbReference type="NCBIfam" id="NF003450">
    <property type="entry name" value="PRK05015.1"/>
    <property type="match status" value="1"/>
</dbReference>
<dbReference type="PANTHER" id="PTHR11963">
    <property type="entry name" value="LEUCINE AMINOPEPTIDASE-RELATED"/>
    <property type="match status" value="1"/>
</dbReference>
<dbReference type="PANTHER" id="PTHR11963:SF20">
    <property type="entry name" value="PEPTIDASE B"/>
    <property type="match status" value="1"/>
</dbReference>
<dbReference type="Pfam" id="PF12404">
    <property type="entry name" value="DUF3663"/>
    <property type="match status" value="1"/>
</dbReference>
<dbReference type="Pfam" id="PF00883">
    <property type="entry name" value="Peptidase_M17"/>
    <property type="match status" value="1"/>
</dbReference>
<dbReference type="PIRSF" id="PIRSF036388">
    <property type="entry name" value="Ctsl_amnpptdse_B"/>
    <property type="match status" value="1"/>
</dbReference>
<dbReference type="PRINTS" id="PR00481">
    <property type="entry name" value="LAMNOPPTDASE"/>
</dbReference>
<dbReference type="SUPFAM" id="SSF53187">
    <property type="entry name" value="Zn-dependent exopeptidases"/>
    <property type="match status" value="1"/>
</dbReference>
<dbReference type="PROSITE" id="PS00631">
    <property type="entry name" value="CYTOSOL_AP"/>
    <property type="match status" value="1"/>
</dbReference>
<protein>
    <recommendedName>
        <fullName>Peptidase B</fullName>
        <ecNumber>3.4.11.23</ecNumber>
    </recommendedName>
    <alternativeName>
        <fullName>Aminopeptidase B</fullName>
    </alternativeName>
</protein>
<feature type="chain" id="PRO_0000165842" description="Peptidase B">
    <location>
        <begin position="1"/>
        <end position="427"/>
    </location>
</feature>
<feature type="active site" evidence="2">
    <location>
        <position position="207"/>
    </location>
</feature>
<feature type="active site" evidence="2">
    <location>
        <position position="281"/>
    </location>
</feature>
<feature type="binding site" evidence="1">
    <location>
        <position position="195"/>
    </location>
    <ligand>
        <name>Mn(2+)</name>
        <dbReference type="ChEBI" id="CHEBI:29035"/>
        <label>2</label>
    </ligand>
</feature>
<feature type="binding site" evidence="1">
    <location>
        <position position="200"/>
    </location>
    <ligand>
        <name>Mn(2+)</name>
        <dbReference type="ChEBI" id="CHEBI:29035"/>
        <label>1</label>
    </ligand>
</feature>
<feature type="binding site" evidence="1">
    <location>
        <position position="200"/>
    </location>
    <ligand>
        <name>Mn(2+)</name>
        <dbReference type="ChEBI" id="CHEBI:29035"/>
        <label>2</label>
    </ligand>
</feature>
<feature type="binding site" evidence="1">
    <location>
        <position position="218"/>
    </location>
    <ligand>
        <name>Mn(2+)</name>
        <dbReference type="ChEBI" id="CHEBI:29035"/>
        <label>2</label>
    </ligand>
</feature>
<feature type="binding site" evidence="1">
    <location>
        <position position="277"/>
    </location>
    <ligand>
        <name>Mn(2+)</name>
        <dbReference type="ChEBI" id="CHEBI:29035"/>
        <label>1</label>
    </ligand>
</feature>
<feature type="binding site" evidence="1">
    <location>
        <position position="279"/>
    </location>
    <ligand>
        <name>Mn(2+)</name>
        <dbReference type="ChEBI" id="CHEBI:29035"/>
        <label>1</label>
    </ligand>
</feature>
<feature type="binding site" evidence="1">
    <location>
        <position position="279"/>
    </location>
    <ligand>
        <name>Mn(2+)</name>
        <dbReference type="ChEBI" id="CHEBI:29035"/>
        <label>2</label>
    </ligand>
</feature>
<feature type="mutagenesis site" description="Reduces the ability to hydrolyze Asp-Leu without decreasing its ability to hydrolyze Leu-Leu." evidence="3">
    <original>K</original>
    <variation>V</variation>
    <location>
        <position position="310"/>
    </location>
</feature>
<name>PEPB_SALTY</name>
<sequence>MTEAMKITLSTQPADARWGDKATYSINNDGITLHLNGKDDLGLIQRAARKIDGLGIKQVALTGEGWDTERCWAFWAGYKGPKGVRTVMWPDLDDAQRQELDNRLTIIDWVRDTINAPAEELGPEQLAQRAVDLLCSVACDSVTYRITKGEDLREQNYMGLHTVGRGSERPPVLLALDYNPTGDKDAPVYACLVGKGITFDSGGYSIKQSAFMDSMKSDMGGAATVTGALAFAITRGLNKRVKLFLCCADNLISGNAFKLGDIIRYRNGKNVEVMNTDAEGRLVLADGLIDASAQHPQLIIDMATLTGAAKTALGNDYHALFSFDDTLAGRLLTSAAQENEPFWRLPLAEFHRNQLPSNFAELNNTGSAAYPAGASTAAGFLSHFVENYREGWLHIDCSATYRKAPVEQWAAGATGLGVRTIANLLTA</sequence>
<accession>Q9RF52</accession>
<comment type="function">
    <text>Probably plays an important role in intracellular peptide degradation.</text>
</comment>
<comment type="catalytic activity">
    <reaction>
        <text>Release of an N-terminal amino acid, Xaa, from a peptide or arylamide. Xaa is preferably Glu or Asp but may be other amino acids, including Leu, Met, His, Cys and Gln.</text>
        <dbReference type="EC" id="3.4.11.23"/>
    </reaction>
</comment>
<comment type="cofactor">
    <cofactor>
        <name>Mn(2+)</name>
        <dbReference type="ChEBI" id="CHEBI:29035"/>
    </cofactor>
    <text>Binds 2 manganese ions per subunit.</text>
</comment>
<comment type="biophysicochemical properties">
    <phDependence>
        <text>Optimum pH is 8.5-9.5.</text>
    </phDependence>
</comment>
<comment type="subunit">
    <text>Homohexamer.</text>
</comment>
<comment type="subcellular location">
    <subcellularLocation>
        <location>Cytoplasm</location>
    </subcellularLocation>
</comment>
<comment type="similarity">
    <text evidence="4">Belongs to the peptidase M17 family.</text>
</comment>
<keyword id="KW-0031">Aminopeptidase</keyword>
<keyword id="KW-0963">Cytoplasm</keyword>
<keyword id="KW-0903">Direct protein sequencing</keyword>
<keyword id="KW-0378">Hydrolase</keyword>
<keyword id="KW-0464">Manganese</keyword>
<keyword id="KW-0479">Metal-binding</keyword>
<keyword id="KW-0645">Protease</keyword>
<keyword id="KW-1185">Reference proteome</keyword>
<proteinExistence type="evidence at protein level"/>
<organism>
    <name type="scientific">Salmonella typhimurium (strain LT2 / SGSC1412 / ATCC 700720)</name>
    <dbReference type="NCBI Taxonomy" id="99287"/>
    <lineage>
        <taxon>Bacteria</taxon>
        <taxon>Pseudomonadati</taxon>
        <taxon>Pseudomonadota</taxon>
        <taxon>Gammaproteobacteria</taxon>
        <taxon>Enterobacterales</taxon>
        <taxon>Enterobacteriaceae</taxon>
        <taxon>Salmonella</taxon>
    </lineage>
</organism>
<reference key="1">
    <citation type="journal article" date="2000" name="J. Bacteriol.">
        <title>Salmonella enterica serovar typhimurium peptidase B is a leucyl aminopeptidase with specificity for acidic amino acids.</title>
        <authorList>
            <person name="Mathew Z."/>
            <person name="Knox T.M."/>
            <person name="Miller C.G."/>
        </authorList>
    </citation>
    <scope>NUCLEOTIDE SEQUENCE [GENOMIC DNA]</scope>
    <scope>PARTIAL PROTEIN SEQUENCE</scope>
    <scope>CHARACTERIZATION</scope>
    <scope>MUTAGENESIS OF LYS-310</scope>
    <source>
        <strain>LT2</strain>
        <strain>TN5179</strain>
    </source>
</reference>
<reference key="2">
    <citation type="journal article" date="2001" name="Nature">
        <title>Complete genome sequence of Salmonella enterica serovar Typhimurium LT2.</title>
        <authorList>
            <person name="McClelland M."/>
            <person name="Sanderson K.E."/>
            <person name="Spieth J."/>
            <person name="Clifton S.W."/>
            <person name="Latreille P."/>
            <person name="Courtney L."/>
            <person name="Porwollik S."/>
            <person name="Ali J."/>
            <person name="Dante M."/>
            <person name="Du F."/>
            <person name="Hou S."/>
            <person name="Layman D."/>
            <person name="Leonard S."/>
            <person name="Nguyen C."/>
            <person name="Scott K."/>
            <person name="Holmes A."/>
            <person name="Grewal N."/>
            <person name="Mulvaney E."/>
            <person name="Ryan E."/>
            <person name="Sun H."/>
            <person name="Florea L."/>
            <person name="Miller W."/>
            <person name="Stoneking T."/>
            <person name="Nhan M."/>
            <person name="Waterston R."/>
            <person name="Wilson R.K."/>
        </authorList>
    </citation>
    <scope>NUCLEOTIDE SEQUENCE [LARGE SCALE GENOMIC DNA]</scope>
    <source>
        <strain>LT2 / SGSC1412 / ATCC 700720</strain>
    </source>
</reference>
<evidence type="ECO:0000250" key="1"/>
<evidence type="ECO:0000255" key="2"/>
<evidence type="ECO:0000269" key="3">
    <source>
    </source>
</evidence>
<evidence type="ECO:0000305" key="4"/>
<gene>
    <name type="primary">pepB</name>
    <name type="ordered locus">STM2536</name>
</gene>